<comment type="function">
    <text evidence="1">Required for the insertion and/or proper folding and/or complex formation of integral membrane proteins into the membrane. Involved in integration of membrane proteins that insert both dependently and independently of the Sec translocase complex, as well as at least some lipoproteins. Aids folding of multispanning membrane proteins.</text>
</comment>
<comment type="subunit">
    <text evidence="1">Interacts with the Sec translocase complex via SecD. Specifically interacts with transmembrane segments of nascent integral membrane proteins during membrane integration.</text>
</comment>
<comment type="subcellular location">
    <subcellularLocation>
        <location evidence="1">Cell inner membrane</location>
        <topology evidence="1">Multi-pass membrane protein</topology>
    </subcellularLocation>
</comment>
<comment type="similarity">
    <text evidence="1">Belongs to the OXA1/ALB3/YidC family. Type 1 subfamily.</text>
</comment>
<keyword id="KW-0997">Cell inner membrane</keyword>
<keyword id="KW-1003">Cell membrane</keyword>
<keyword id="KW-0143">Chaperone</keyword>
<keyword id="KW-0472">Membrane</keyword>
<keyword id="KW-0653">Protein transport</keyword>
<keyword id="KW-1185">Reference proteome</keyword>
<keyword id="KW-0812">Transmembrane</keyword>
<keyword id="KW-1133">Transmembrane helix</keyword>
<keyword id="KW-0813">Transport</keyword>
<sequence length="559" mass="61386">MDIRRTVLWMIFSFSLLLLWNNWQIHNGQPALFGGPSPEQNAPATANNQAATNPASNTPAVPNAPAATSAPSSVPGSTAPAPAQAQEVVITTDVLRLTFSSTGAQIIRAELLKYPATAGSDQPMVLLDRSAGLTYTAQTGVIGAGQNFPTHLTPFAVTTNERELTGDKLVVRFEAESGGLRVIKTFTLDRGSYDVHVRHDVTNVGTAAQHPSVYLQLERDGNDPAGTSSFYHTFTGVAVYSEQDKFQKVTFSDIAKNKASYIKQADNGWIGIVQHYFATAWVPKEGTPRTNDLLQLQPNLFAARAIEALGEVAPGATVSSDAQLWVGPQDQQAMAAVAPGLELVVDYGWLTIIAKPLFTLMTWLHSLLGNWGWTIVALTVIIKAVFYPLASASYRSMARMKQVAPRLQALKEKYGDDRQKLNQAMMEMYRTEKINPLGGCLPMVVQIPVFIALYWVLLASVEMRGAPWILWIHDLSVRDPYFILPAVMMATMFLQIKLNPTPPDPVQAKVMMVMPLVFGGMMFFFPAGLVLYWCVNNTLSILQQWSITRSITRQTAKRG</sequence>
<reference key="1">
    <citation type="journal article" date="2006" name="J. Bacteriol.">
        <title>Comparison of the genome sequence of the poultry pathogen Bordetella avium with those of B. bronchiseptica, B. pertussis, and B. parapertussis reveals extensive diversity in surface structures associated with host interaction.</title>
        <authorList>
            <person name="Sebaihia M."/>
            <person name="Preston A."/>
            <person name="Maskell D.J."/>
            <person name="Kuzmiak H."/>
            <person name="Connell T.D."/>
            <person name="King N.D."/>
            <person name="Orndorff P.E."/>
            <person name="Miyamoto D.M."/>
            <person name="Thomson N.R."/>
            <person name="Harris D."/>
            <person name="Goble A."/>
            <person name="Lord A."/>
            <person name="Murphy L."/>
            <person name="Quail M.A."/>
            <person name="Rutter S."/>
            <person name="Squares R."/>
            <person name="Squares S."/>
            <person name="Woodward J."/>
            <person name="Parkhill J."/>
            <person name="Temple L.M."/>
        </authorList>
    </citation>
    <scope>NUCLEOTIDE SEQUENCE [LARGE SCALE GENOMIC DNA]</scope>
    <source>
        <strain>197N</strain>
    </source>
</reference>
<name>YIDC_BORA1</name>
<organism>
    <name type="scientific">Bordetella avium (strain 197N)</name>
    <dbReference type="NCBI Taxonomy" id="360910"/>
    <lineage>
        <taxon>Bacteria</taxon>
        <taxon>Pseudomonadati</taxon>
        <taxon>Pseudomonadota</taxon>
        <taxon>Betaproteobacteria</taxon>
        <taxon>Burkholderiales</taxon>
        <taxon>Alcaligenaceae</taxon>
        <taxon>Bordetella</taxon>
    </lineage>
</organism>
<proteinExistence type="inferred from homology"/>
<evidence type="ECO:0000255" key="1">
    <source>
        <dbReference type="HAMAP-Rule" id="MF_01810"/>
    </source>
</evidence>
<evidence type="ECO:0000256" key="2">
    <source>
        <dbReference type="SAM" id="MobiDB-lite"/>
    </source>
</evidence>
<protein>
    <recommendedName>
        <fullName evidence="1">Membrane protein insertase YidC</fullName>
    </recommendedName>
    <alternativeName>
        <fullName evidence="1">Foldase YidC</fullName>
    </alternativeName>
    <alternativeName>
        <fullName evidence="1">Membrane integrase YidC</fullName>
    </alternativeName>
    <alternativeName>
        <fullName evidence="1">Membrane protein YidC</fullName>
    </alternativeName>
</protein>
<accession>Q2KTI5</accession>
<feature type="chain" id="PRO_1000070061" description="Membrane protein insertase YidC">
    <location>
        <begin position="1"/>
        <end position="559"/>
    </location>
</feature>
<feature type="transmembrane region" description="Helical" evidence="1">
    <location>
        <begin position="6"/>
        <end position="26"/>
    </location>
</feature>
<feature type="transmembrane region" description="Helical" evidence="1">
    <location>
        <begin position="367"/>
        <end position="387"/>
    </location>
</feature>
<feature type="transmembrane region" description="Helical" evidence="1">
    <location>
        <begin position="441"/>
        <end position="461"/>
    </location>
</feature>
<feature type="transmembrane region" description="Helical" evidence="1">
    <location>
        <begin position="480"/>
        <end position="500"/>
    </location>
</feature>
<feature type="transmembrane region" description="Helical" evidence="1">
    <location>
        <begin position="510"/>
        <end position="530"/>
    </location>
</feature>
<feature type="region of interest" description="Disordered" evidence="2">
    <location>
        <begin position="34"/>
        <end position="80"/>
    </location>
</feature>
<feature type="compositionally biased region" description="Low complexity" evidence="2">
    <location>
        <begin position="42"/>
        <end position="80"/>
    </location>
</feature>
<dbReference type="EMBL" id="AM167904">
    <property type="protein sequence ID" value="CAJ51026.1"/>
    <property type="molecule type" value="Genomic_DNA"/>
</dbReference>
<dbReference type="RefSeq" id="WP_012419052.1">
    <property type="nucleotide sequence ID" value="NC_010645.1"/>
</dbReference>
<dbReference type="SMR" id="Q2KTI5"/>
<dbReference type="STRING" id="360910.BAV3416"/>
<dbReference type="GeneID" id="92936769"/>
<dbReference type="KEGG" id="bav:BAV3416"/>
<dbReference type="eggNOG" id="COG0706">
    <property type="taxonomic scope" value="Bacteria"/>
</dbReference>
<dbReference type="HOGENOM" id="CLU_016535_3_0_4"/>
<dbReference type="OrthoDB" id="9780552at2"/>
<dbReference type="Proteomes" id="UP000001977">
    <property type="component" value="Chromosome"/>
</dbReference>
<dbReference type="GO" id="GO:0005886">
    <property type="term" value="C:plasma membrane"/>
    <property type="evidence" value="ECO:0007669"/>
    <property type="project" value="UniProtKB-SubCell"/>
</dbReference>
<dbReference type="GO" id="GO:0032977">
    <property type="term" value="F:membrane insertase activity"/>
    <property type="evidence" value="ECO:0007669"/>
    <property type="project" value="InterPro"/>
</dbReference>
<dbReference type="GO" id="GO:0051205">
    <property type="term" value="P:protein insertion into membrane"/>
    <property type="evidence" value="ECO:0007669"/>
    <property type="project" value="TreeGrafter"/>
</dbReference>
<dbReference type="GO" id="GO:0015031">
    <property type="term" value="P:protein transport"/>
    <property type="evidence" value="ECO:0007669"/>
    <property type="project" value="UniProtKB-KW"/>
</dbReference>
<dbReference type="CDD" id="cd20070">
    <property type="entry name" value="5TM_YidC_Alb3"/>
    <property type="match status" value="1"/>
</dbReference>
<dbReference type="CDD" id="cd19961">
    <property type="entry name" value="EcYidC-like_peri"/>
    <property type="match status" value="1"/>
</dbReference>
<dbReference type="Gene3D" id="2.70.98.90">
    <property type="match status" value="1"/>
</dbReference>
<dbReference type="HAMAP" id="MF_01810">
    <property type="entry name" value="YidC_type1"/>
    <property type="match status" value="1"/>
</dbReference>
<dbReference type="InterPro" id="IPR019998">
    <property type="entry name" value="Membr_insert_YidC"/>
</dbReference>
<dbReference type="InterPro" id="IPR028053">
    <property type="entry name" value="Membr_insert_YidC_N"/>
</dbReference>
<dbReference type="InterPro" id="IPR001708">
    <property type="entry name" value="YidC/ALB3/OXA1/COX18"/>
</dbReference>
<dbReference type="InterPro" id="IPR028055">
    <property type="entry name" value="YidC/Oxa/ALB_C"/>
</dbReference>
<dbReference type="InterPro" id="IPR047196">
    <property type="entry name" value="YidC_ALB_C"/>
</dbReference>
<dbReference type="InterPro" id="IPR038221">
    <property type="entry name" value="YidC_periplasmic_sf"/>
</dbReference>
<dbReference type="NCBIfam" id="NF002352">
    <property type="entry name" value="PRK01318.1-3"/>
    <property type="match status" value="1"/>
</dbReference>
<dbReference type="NCBIfam" id="NF002353">
    <property type="entry name" value="PRK01318.1-4"/>
    <property type="match status" value="1"/>
</dbReference>
<dbReference type="NCBIfam" id="TIGR03593">
    <property type="entry name" value="yidC_nterm"/>
    <property type="match status" value="1"/>
</dbReference>
<dbReference type="NCBIfam" id="TIGR03592">
    <property type="entry name" value="yidC_oxa1_cterm"/>
    <property type="match status" value="1"/>
</dbReference>
<dbReference type="PANTHER" id="PTHR12428:SF65">
    <property type="entry name" value="CYTOCHROME C OXIDASE ASSEMBLY PROTEIN COX18, MITOCHONDRIAL"/>
    <property type="match status" value="1"/>
</dbReference>
<dbReference type="PANTHER" id="PTHR12428">
    <property type="entry name" value="OXA1"/>
    <property type="match status" value="1"/>
</dbReference>
<dbReference type="Pfam" id="PF02096">
    <property type="entry name" value="60KD_IMP"/>
    <property type="match status" value="1"/>
</dbReference>
<dbReference type="Pfam" id="PF14849">
    <property type="entry name" value="YidC_periplas"/>
    <property type="match status" value="1"/>
</dbReference>
<dbReference type="PRINTS" id="PR00701">
    <property type="entry name" value="60KDINNERMP"/>
</dbReference>
<dbReference type="PRINTS" id="PR01900">
    <property type="entry name" value="YIDCPROTEIN"/>
</dbReference>
<gene>
    <name evidence="1" type="primary">yidC</name>
    <name type="ordered locus">BAV3416</name>
</gene>